<protein>
    <recommendedName>
        <fullName>UPF0759 protein YecE</fullName>
    </recommendedName>
</protein>
<evidence type="ECO:0000305" key="1"/>
<sequence length="272" mass="31451">MIYIGLPQWSHPKWVRLGITSLEEYARHFNCVEGNTTLYALPKPEVVLRWREQTTDDFRFCFKFPATISHQAALRHCDDLVTEFLTRMSPLAPRIGQYWLQLPATFGPRELPALWHFLDSLPGEFNYGVEVRHPQFFAKGEEEQTLNRGLHQRGVNQVILDSRPVHAARPHSEAIRDAQRKKPKVPVHAVLTATNPLIRFIGSDDMTQNRELFQVWLQKLAQWHQTTTPYLFLHTPDIAQAPELVHTLWEDLRKTLPEIGAVPAIPQQSSLF</sequence>
<accession>Q8XCI6</accession>
<name>YECE_ECO57</name>
<keyword id="KW-1185">Reference proteome</keyword>
<feature type="chain" id="PRO_0000169072" description="UPF0759 protein YecE">
    <location>
        <begin position="1"/>
        <end position="272"/>
    </location>
</feature>
<proteinExistence type="inferred from homology"/>
<organism>
    <name type="scientific">Escherichia coli O157:H7</name>
    <dbReference type="NCBI Taxonomy" id="83334"/>
    <lineage>
        <taxon>Bacteria</taxon>
        <taxon>Pseudomonadati</taxon>
        <taxon>Pseudomonadota</taxon>
        <taxon>Gammaproteobacteria</taxon>
        <taxon>Enterobacterales</taxon>
        <taxon>Enterobacteriaceae</taxon>
        <taxon>Escherichia</taxon>
    </lineage>
</organism>
<reference key="1">
    <citation type="journal article" date="2001" name="Nature">
        <title>Genome sequence of enterohaemorrhagic Escherichia coli O157:H7.</title>
        <authorList>
            <person name="Perna N.T."/>
            <person name="Plunkett G. III"/>
            <person name="Burland V."/>
            <person name="Mau B."/>
            <person name="Glasner J.D."/>
            <person name="Rose D.J."/>
            <person name="Mayhew G.F."/>
            <person name="Evans P.S."/>
            <person name="Gregor J."/>
            <person name="Kirkpatrick H.A."/>
            <person name="Posfai G."/>
            <person name="Hackett J."/>
            <person name="Klink S."/>
            <person name="Boutin A."/>
            <person name="Shao Y."/>
            <person name="Miller L."/>
            <person name="Grotbeck E.J."/>
            <person name="Davis N.W."/>
            <person name="Lim A."/>
            <person name="Dimalanta E.T."/>
            <person name="Potamousis K."/>
            <person name="Apodaca J."/>
            <person name="Anantharaman T.S."/>
            <person name="Lin J."/>
            <person name="Yen G."/>
            <person name="Schwartz D.C."/>
            <person name="Welch R.A."/>
            <person name="Blattner F.R."/>
        </authorList>
    </citation>
    <scope>NUCLEOTIDE SEQUENCE [LARGE SCALE GENOMIC DNA]</scope>
    <source>
        <strain>O157:H7 / EDL933 / ATCC 700927 / EHEC</strain>
    </source>
</reference>
<reference key="2">
    <citation type="journal article" date="2001" name="DNA Res.">
        <title>Complete genome sequence of enterohemorrhagic Escherichia coli O157:H7 and genomic comparison with a laboratory strain K-12.</title>
        <authorList>
            <person name="Hayashi T."/>
            <person name="Makino K."/>
            <person name="Ohnishi M."/>
            <person name="Kurokawa K."/>
            <person name="Ishii K."/>
            <person name="Yokoyama K."/>
            <person name="Han C.-G."/>
            <person name="Ohtsubo E."/>
            <person name="Nakayama K."/>
            <person name="Murata T."/>
            <person name="Tanaka M."/>
            <person name="Tobe T."/>
            <person name="Iida T."/>
            <person name="Takami H."/>
            <person name="Honda T."/>
            <person name="Sasakawa C."/>
            <person name="Ogasawara N."/>
            <person name="Yasunaga T."/>
            <person name="Kuhara S."/>
            <person name="Shiba T."/>
            <person name="Hattori M."/>
            <person name="Shinagawa H."/>
        </authorList>
    </citation>
    <scope>NUCLEOTIDE SEQUENCE [LARGE SCALE GENOMIC DNA]</scope>
    <source>
        <strain>O157:H7 / Sakai / RIMD 0509952 / EHEC</strain>
    </source>
</reference>
<gene>
    <name type="primary">yecE</name>
    <name type="ordered locus">Z2921</name>
    <name type="ordered locus">ECs2578</name>
</gene>
<comment type="similarity">
    <text evidence="1">Belongs to the UPF0759 family.</text>
</comment>
<dbReference type="EMBL" id="AE005174">
    <property type="protein sequence ID" value="AAG56858.1"/>
    <property type="molecule type" value="Genomic_DNA"/>
</dbReference>
<dbReference type="EMBL" id="BA000007">
    <property type="protein sequence ID" value="BAB36001.1"/>
    <property type="molecule type" value="Genomic_DNA"/>
</dbReference>
<dbReference type="PIR" id="B90951">
    <property type="entry name" value="B90951"/>
</dbReference>
<dbReference type="PIR" id="F85799">
    <property type="entry name" value="F85799"/>
</dbReference>
<dbReference type="RefSeq" id="NP_310605.1">
    <property type="nucleotide sequence ID" value="NC_002695.1"/>
</dbReference>
<dbReference type="RefSeq" id="WP_000639267.1">
    <property type="nucleotide sequence ID" value="NZ_VOAI01000010.1"/>
</dbReference>
<dbReference type="SMR" id="Q8XCI6"/>
<dbReference type="STRING" id="155864.Z2921"/>
<dbReference type="GeneID" id="913980"/>
<dbReference type="KEGG" id="ece:Z2921"/>
<dbReference type="KEGG" id="ecs:ECs_2578"/>
<dbReference type="PATRIC" id="fig|386585.9.peg.2702"/>
<dbReference type="eggNOG" id="COG1801">
    <property type="taxonomic scope" value="Bacteria"/>
</dbReference>
<dbReference type="HOGENOM" id="CLU_046519_2_1_6"/>
<dbReference type="OMA" id="HDDFRFC"/>
<dbReference type="Proteomes" id="UP000000558">
    <property type="component" value="Chromosome"/>
</dbReference>
<dbReference type="Proteomes" id="UP000002519">
    <property type="component" value="Chromosome"/>
</dbReference>
<dbReference type="Gene3D" id="3.20.20.410">
    <property type="entry name" value="Protein of unknown function UPF0759"/>
    <property type="match status" value="1"/>
</dbReference>
<dbReference type="InterPro" id="IPR002763">
    <property type="entry name" value="DUF72"/>
</dbReference>
<dbReference type="InterPro" id="IPR036520">
    <property type="entry name" value="UPF0759_sf"/>
</dbReference>
<dbReference type="NCBIfam" id="NF007637">
    <property type="entry name" value="PRK10302.1"/>
    <property type="match status" value="1"/>
</dbReference>
<dbReference type="PANTHER" id="PTHR30348">
    <property type="entry name" value="UNCHARACTERIZED PROTEIN YECE"/>
    <property type="match status" value="1"/>
</dbReference>
<dbReference type="PANTHER" id="PTHR30348:SF9">
    <property type="entry name" value="UPF0759 PROTEIN YECE"/>
    <property type="match status" value="1"/>
</dbReference>
<dbReference type="Pfam" id="PF01904">
    <property type="entry name" value="DUF72"/>
    <property type="match status" value="1"/>
</dbReference>
<dbReference type="SUPFAM" id="SSF117396">
    <property type="entry name" value="TM1631-like"/>
    <property type="match status" value="1"/>
</dbReference>